<dbReference type="EC" id="3.1.1.29" evidence="1"/>
<dbReference type="EMBL" id="CP000948">
    <property type="protein sequence ID" value="ACB02374.1"/>
    <property type="molecule type" value="Genomic_DNA"/>
</dbReference>
<dbReference type="RefSeq" id="WP_000152933.1">
    <property type="nucleotide sequence ID" value="NC_010473.1"/>
</dbReference>
<dbReference type="BMRB" id="B1XAP5"/>
<dbReference type="SMR" id="B1XAP5"/>
<dbReference type="GeneID" id="93775269"/>
<dbReference type="KEGG" id="ecd:ECDH10B_1257"/>
<dbReference type="HOGENOM" id="CLU_062456_3_1_6"/>
<dbReference type="GO" id="GO:0005737">
    <property type="term" value="C:cytoplasm"/>
    <property type="evidence" value="ECO:0007669"/>
    <property type="project" value="UniProtKB-SubCell"/>
</dbReference>
<dbReference type="GO" id="GO:0004045">
    <property type="term" value="F:peptidyl-tRNA hydrolase activity"/>
    <property type="evidence" value="ECO:0007669"/>
    <property type="project" value="UniProtKB-UniRule"/>
</dbReference>
<dbReference type="GO" id="GO:0000049">
    <property type="term" value="F:tRNA binding"/>
    <property type="evidence" value="ECO:0007669"/>
    <property type="project" value="UniProtKB-UniRule"/>
</dbReference>
<dbReference type="GO" id="GO:0006515">
    <property type="term" value="P:protein quality control for misfolded or incompletely synthesized proteins"/>
    <property type="evidence" value="ECO:0007669"/>
    <property type="project" value="UniProtKB-UniRule"/>
</dbReference>
<dbReference type="GO" id="GO:0072344">
    <property type="term" value="P:rescue of stalled ribosome"/>
    <property type="evidence" value="ECO:0007669"/>
    <property type="project" value="UniProtKB-UniRule"/>
</dbReference>
<dbReference type="CDD" id="cd00462">
    <property type="entry name" value="PTH"/>
    <property type="match status" value="1"/>
</dbReference>
<dbReference type="FunFam" id="3.40.50.1470:FF:000001">
    <property type="entry name" value="Peptidyl-tRNA hydrolase"/>
    <property type="match status" value="1"/>
</dbReference>
<dbReference type="Gene3D" id="3.40.50.1470">
    <property type="entry name" value="Peptidyl-tRNA hydrolase"/>
    <property type="match status" value="1"/>
</dbReference>
<dbReference type="HAMAP" id="MF_00083">
    <property type="entry name" value="Pept_tRNA_hydro_bact"/>
    <property type="match status" value="1"/>
</dbReference>
<dbReference type="InterPro" id="IPR001328">
    <property type="entry name" value="Pept_tRNA_hydro"/>
</dbReference>
<dbReference type="InterPro" id="IPR018171">
    <property type="entry name" value="Pept_tRNA_hydro_CS"/>
</dbReference>
<dbReference type="InterPro" id="IPR036416">
    <property type="entry name" value="Pept_tRNA_hydro_sf"/>
</dbReference>
<dbReference type="NCBIfam" id="TIGR00447">
    <property type="entry name" value="pth"/>
    <property type="match status" value="1"/>
</dbReference>
<dbReference type="PANTHER" id="PTHR17224">
    <property type="entry name" value="PEPTIDYL-TRNA HYDROLASE"/>
    <property type="match status" value="1"/>
</dbReference>
<dbReference type="PANTHER" id="PTHR17224:SF1">
    <property type="entry name" value="PEPTIDYL-TRNA HYDROLASE"/>
    <property type="match status" value="1"/>
</dbReference>
<dbReference type="Pfam" id="PF01195">
    <property type="entry name" value="Pept_tRNA_hydro"/>
    <property type="match status" value="1"/>
</dbReference>
<dbReference type="SUPFAM" id="SSF53178">
    <property type="entry name" value="Peptidyl-tRNA hydrolase-like"/>
    <property type="match status" value="1"/>
</dbReference>
<dbReference type="PROSITE" id="PS01195">
    <property type="entry name" value="PEPT_TRNA_HYDROL_1"/>
    <property type="match status" value="1"/>
</dbReference>
<dbReference type="PROSITE" id="PS01196">
    <property type="entry name" value="PEPT_TRNA_HYDROL_2"/>
    <property type="match status" value="1"/>
</dbReference>
<feature type="chain" id="PRO_1000092938" description="Peptidyl-tRNA hydrolase">
    <location>
        <begin position="1"/>
        <end position="194"/>
    </location>
</feature>
<feature type="active site" description="Proton acceptor" evidence="1">
    <location>
        <position position="21"/>
    </location>
</feature>
<feature type="binding site" evidence="1">
    <location>
        <position position="16"/>
    </location>
    <ligand>
        <name>tRNA</name>
        <dbReference type="ChEBI" id="CHEBI:17843"/>
    </ligand>
</feature>
<feature type="binding site" evidence="1">
    <location>
        <position position="67"/>
    </location>
    <ligand>
        <name>tRNA</name>
        <dbReference type="ChEBI" id="CHEBI:17843"/>
    </ligand>
</feature>
<feature type="binding site" evidence="1">
    <location>
        <position position="69"/>
    </location>
    <ligand>
        <name>tRNA</name>
        <dbReference type="ChEBI" id="CHEBI:17843"/>
    </ligand>
</feature>
<feature type="binding site" evidence="1">
    <location>
        <position position="115"/>
    </location>
    <ligand>
        <name>tRNA</name>
        <dbReference type="ChEBI" id="CHEBI:17843"/>
    </ligand>
</feature>
<feature type="site" description="Discriminates between blocked and unblocked aminoacyl-tRNA" evidence="1">
    <location>
        <position position="11"/>
    </location>
</feature>
<feature type="site" description="Stabilizes the basic form of H active site to accept a proton" evidence="1">
    <location>
        <position position="94"/>
    </location>
</feature>
<protein>
    <recommendedName>
        <fullName evidence="1">Peptidyl-tRNA hydrolase</fullName>
        <shortName evidence="1">Pth</shortName>
        <ecNumber evidence="1">3.1.1.29</ecNumber>
    </recommendedName>
</protein>
<name>PTH_ECODH</name>
<reference key="1">
    <citation type="journal article" date="2008" name="J. Bacteriol.">
        <title>The complete genome sequence of Escherichia coli DH10B: insights into the biology of a laboratory workhorse.</title>
        <authorList>
            <person name="Durfee T."/>
            <person name="Nelson R."/>
            <person name="Baldwin S."/>
            <person name="Plunkett G. III"/>
            <person name="Burland V."/>
            <person name="Mau B."/>
            <person name="Petrosino J.F."/>
            <person name="Qin X."/>
            <person name="Muzny D.M."/>
            <person name="Ayele M."/>
            <person name="Gibbs R.A."/>
            <person name="Csorgo B."/>
            <person name="Posfai G."/>
            <person name="Weinstock G.M."/>
            <person name="Blattner F.R."/>
        </authorList>
    </citation>
    <scope>NUCLEOTIDE SEQUENCE [LARGE SCALE GENOMIC DNA]</scope>
    <source>
        <strain>K12 / DH10B</strain>
    </source>
</reference>
<proteinExistence type="inferred from homology"/>
<sequence>MTIKLIVGLANPGAEYAATRHNAGAWFVDLLAERLRAPLREEAKFFGYTSRVTLGGEDVRLLVPTTFMNLSGKAVAAMASFFRINPDEILVAHDELDLPPGVAKFKLGGGHGGHNGLKDIISKLGNNPNFHRLRIGIGHPGDKNKVVGFVLGKPPVSEQKLIDEAIDEAARCTEMWFTDGLTKATNRLHAFKAQ</sequence>
<gene>
    <name evidence="1" type="primary">pth</name>
    <name type="ordered locus">ECDH10B_1257</name>
</gene>
<evidence type="ECO:0000255" key="1">
    <source>
        <dbReference type="HAMAP-Rule" id="MF_00083"/>
    </source>
</evidence>
<comment type="function">
    <text evidence="1">Hydrolyzes ribosome-free peptidyl-tRNAs (with 1 or more amino acids incorporated), which drop off the ribosome during protein synthesis, or as a result of ribosome stalling.</text>
</comment>
<comment type="function">
    <text evidence="1">Catalyzes the release of premature peptidyl moieties from peptidyl-tRNA molecules trapped in stalled 50S ribosomal subunits, and thus maintains levels of free tRNAs and 50S ribosomes.</text>
</comment>
<comment type="catalytic activity">
    <reaction evidence="1">
        <text>an N-acyl-L-alpha-aminoacyl-tRNA + H2O = an N-acyl-L-amino acid + a tRNA + H(+)</text>
        <dbReference type="Rhea" id="RHEA:54448"/>
        <dbReference type="Rhea" id="RHEA-COMP:10123"/>
        <dbReference type="Rhea" id="RHEA-COMP:13883"/>
        <dbReference type="ChEBI" id="CHEBI:15377"/>
        <dbReference type="ChEBI" id="CHEBI:15378"/>
        <dbReference type="ChEBI" id="CHEBI:59874"/>
        <dbReference type="ChEBI" id="CHEBI:78442"/>
        <dbReference type="ChEBI" id="CHEBI:138191"/>
        <dbReference type="EC" id="3.1.1.29"/>
    </reaction>
</comment>
<comment type="subunit">
    <text evidence="1">Monomer.</text>
</comment>
<comment type="subcellular location">
    <subcellularLocation>
        <location evidence="1">Cytoplasm</location>
    </subcellularLocation>
</comment>
<comment type="similarity">
    <text evidence="1">Belongs to the PTH family.</text>
</comment>
<keyword id="KW-0963">Cytoplasm</keyword>
<keyword id="KW-0378">Hydrolase</keyword>
<keyword id="KW-0694">RNA-binding</keyword>
<keyword id="KW-0820">tRNA-binding</keyword>
<accession>B1XAP5</accession>
<organism>
    <name type="scientific">Escherichia coli (strain K12 / DH10B)</name>
    <dbReference type="NCBI Taxonomy" id="316385"/>
    <lineage>
        <taxon>Bacteria</taxon>
        <taxon>Pseudomonadati</taxon>
        <taxon>Pseudomonadota</taxon>
        <taxon>Gammaproteobacteria</taxon>
        <taxon>Enterobacterales</taxon>
        <taxon>Enterobacteriaceae</taxon>
        <taxon>Escherichia</taxon>
    </lineage>
</organism>